<sequence>MAQVFNFSSGPAMLPAEVLKLAQQDLRDWHGLGTSVMEISHRGKEFIQVAEEAEQDFRDLLSIPSNYKVLFCHGGGRGQFAAIPLNILGDKTSADYVDAGYWAASAIKEAKKYCSPNVIDAKVTVDGLRAVKPMSEWQLSDNAAYVHYCPNETIDGIAIDETPNFGSDVVVAADFSSTILSAPLDVSRYGVIYAGAQKNIGPAGLTIVIVREDLLGKANIACPSILDYTVLNDNDSMFNTPPTFAWYLSGLVFKWLKAQGGVAAMNKINQQKAELLYGVIDNSDFYRNDVAKSNRSRMNVPFQLADSALDKVFLEESFAAGLHALKGHRVVGGMRASIYNAMPLEGVKALTDFMVDFERRHG</sequence>
<feature type="chain" id="PRO_1000203517" description="Phosphoserine aminotransferase">
    <location>
        <begin position="1"/>
        <end position="362"/>
    </location>
</feature>
<feature type="binding site" evidence="1">
    <location>
        <position position="9"/>
    </location>
    <ligand>
        <name>L-glutamate</name>
        <dbReference type="ChEBI" id="CHEBI:29985"/>
    </ligand>
</feature>
<feature type="binding site" evidence="1">
    <location>
        <position position="42"/>
    </location>
    <ligand>
        <name>L-glutamate</name>
        <dbReference type="ChEBI" id="CHEBI:29985"/>
    </ligand>
</feature>
<feature type="binding site" evidence="1">
    <location>
        <begin position="76"/>
        <end position="77"/>
    </location>
    <ligand>
        <name>pyridoxal 5'-phosphate</name>
        <dbReference type="ChEBI" id="CHEBI:597326"/>
    </ligand>
</feature>
<feature type="binding site" evidence="1">
    <location>
        <position position="102"/>
    </location>
    <ligand>
        <name>pyridoxal 5'-phosphate</name>
        <dbReference type="ChEBI" id="CHEBI:597326"/>
    </ligand>
</feature>
<feature type="binding site" evidence="1">
    <location>
        <position position="153"/>
    </location>
    <ligand>
        <name>pyridoxal 5'-phosphate</name>
        <dbReference type="ChEBI" id="CHEBI:597326"/>
    </ligand>
</feature>
<feature type="binding site" evidence="1">
    <location>
        <position position="174"/>
    </location>
    <ligand>
        <name>pyridoxal 5'-phosphate</name>
        <dbReference type="ChEBI" id="CHEBI:597326"/>
    </ligand>
</feature>
<feature type="binding site" evidence="1">
    <location>
        <position position="197"/>
    </location>
    <ligand>
        <name>pyridoxal 5'-phosphate</name>
        <dbReference type="ChEBI" id="CHEBI:597326"/>
    </ligand>
</feature>
<feature type="binding site" evidence="1">
    <location>
        <begin position="239"/>
        <end position="240"/>
    </location>
    <ligand>
        <name>pyridoxal 5'-phosphate</name>
        <dbReference type="ChEBI" id="CHEBI:597326"/>
    </ligand>
</feature>
<feature type="modified residue" description="N6-(pyridoxal phosphate)lysine" evidence="1">
    <location>
        <position position="198"/>
    </location>
</feature>
<dbReference type="EC" id="2.6.1.52" evidence="1"/>
<dbReference type="EMBL" id="CP000822">
    <property type="protein sequence ID" value="ABV13289.1"/>
    <property type="molecule type" value="Genomic_DNA"/>
</dbReference>
<dbReference type="RefSeq" id="WP_012133020.1">
    <property type="nucleotide sequence ID" value="NC_009792.1"/>
</dbReference>
<dbReference type="SMR" id="A8AIH6"/>
<dbReference type="STRING" id="290338.CKO_02165"/>
<dbReference type="GeneID" id="45136101"/>
<dbReference type="KEGG" id="cko:CKO_02165"/>
<dbReference type="HOGENOM" id="CLU_034866_0_2_6"/>
<dbReference type="OrthoDB" id="9809412at2"/>
<dbReference type="UniPathway" id="UPA00135">
    <property type="reaction ID" value="UER00197"/>
</dbReference>
<dbReference type="UniPathway" id="UPA00244">
    <property type="reaction ID" value="UER00311"/>
</dbReference>
<dbReference type="Proteomes" id="UP000008148">
    <property type="component" value="Chromosome"/>
</dbReference>
<dbReference type="GO" id="GO:0005737">
    <property type="term" value="C:cytoplasm"/>
    <property type="evidence" value="ECO:0007669"/>
    <property type="project" value="UniProtKB-SubCell"/>
</dbReference>
<dbReference type="GO" id="GO:0004648">
    <property type="term" value="F:O-phospho-L-serine:2-oxoglutarate aminotransferase activity"/>
    <property type="evidence" value="ECO:0007669"/>
    <property type="project" value="UniProtKB-UniRule"/>
</dbReference>
<dbReference type="GO" id="GO:0030170">
    <property type="term" value="F:pyridoxal phosphate binding"/>
    <property type="evidence" value="ECO:0007669"/>
    <property type="project" value="UniProtKB-UniRule"/>
</dbReference>
<dbReference type="GO" id="GO:0006564">
    <property type="term" value="P:L-serine biosynthetic process"/>
    <property type="evidence" value="ECO:0007669"/>
    <property type="project" value="UniProtKB-UniRule"/>
</dbReference>
<dbReference type="GO" id="GO:0008615">
    <property type="term" value="P:pyridoxine biosynthetic process"/>
    <property type="evidence" value="ECO:0007669"/>
    <property type="project" value="UniProtKB-UniRule"/>
</dbReference>
<dbReference type="CDD" id="cd00611">
    <property type="entry name" value="PSAT_like"/>
    <property type="match status" value="1"/>
</dbReference>
<dbReference type="FunFam" id="3.40.640.10:FF:000010">
    <property type="entry name" value="Phosphoserine aminotransferase"/>
    <property type="match status" value="1"/>
</dbReference>
<dbReference type="FunFam" id="3.90.1150.10:FF:000006">
    <property type="entry name" value="Phosphoserine aminotransferase"/>
    <property type="match status" value="1"/>
</dbReference>
<dbReference type="Gene3D" id="3.90.1150.10">
    <property type="entry name" value="Aspartate Aminotransferase, domain 1"/>
    <property type="match status" value="1"/>
</dbReference>
<dbReference type="Gene3D" id="3.40.640.10">
    <property type="entry name" value="Type I PLP-dependent aspartate aminotransferase-like (Major domain)"/>
    <property type="match status" value="1"/>
</dbReference>
<dbReference type="HAMAP" id="MF_00160">
    <property type="entry name" value="SerC_aminotrans_5"/>
    <property type="match status" value="1"/>
</dbReference>
<dbReference type="InterPro" id="IPR000192">
    <property type="entry name" value="Aminotrans_V_dom"/>
</dbReference>
<dbReference type="InterPro" id="IPR020578">
    <property type="entry name" value="Aminotrans_V_PyrdxlP_BS"/>
</dbReference>
<dbReference type="InterPro" id="IPR022278">
    <property type="entry name" value="Pser_aminoTfrase"/>
</dbReference>
<dbReference type="InterPro" id="IPR015424">
    <property type="entry name" value="PyrdxlP-dep_Trfase"/>
</dbReference>
<dbReference type="InterPro" id="IPR015421">
    <property type="entry name" value="PyrdxlP-dep_Trfase_major"/>
</dbReference>
<dbReference type="InterPro" id="IPR015422">
    <property type="entry name" value="PyrdxlP-dep_Trfase_small"/>
</dbReference>
<dbReference type="NCBIfam" id="NF003764">
    <property type="entry name" value="PRK05355.1"/>
    <property type="match status" value="1"/>
</dbReference>
<dbReference type="NCBIfam" id="TIGR01364">
    <property type="entry name" value="serC_1"/>
    <property type="match status" value="1"/>
</dbReference>
<dbReference type="PANTHER" id="PTHR43247">
    <property type="entry name" value="PHOSPHOSERINE AMINOTRANSFERASE"/>
    <property type="match status" value="1"/>
</dbReference>
<dbReference type="PANTHER" id="PTHR43247:SF1">
    <property type="entry name" value="PHOSPHOSERINE AMINOTRANSFERASE"/>
    <property type="match status" value="1"/>
</dbReference>
<dbReference type="Pfam" id="PF00266">
    <property type="entry name" value="Aminotran_5"/>
    <property type="match status" value="1"/>
</dbReference>
<dbReference type="PIRSF" id="PIRSF000525">
    <property type="entry name" value="SerC"/>
    <property type="match status" value="1"/>
</dbReference>
<dbReference type="SUPFAM" id="SSF53383">
    <property type="entry name" value="PLP-dependent transferases"/>
    <property type="match status" value="1"/>
</dbReference>
<dbReference type="PROSITE" id="PS00595">
    <property type="entry name" value="AA_TRANSFER_CLASS_5"/>
    <property type="match status" value="1"/>
</dbReference>
<reference key="1">
    <citation type="submission" date="2007-08" db="EMBL/GenBank/DDBJ databases">
        <authorList>
            <consortium name="The Citrobacter koseri Genome Sequencing Project"/>
            <person name="McClelland M."/>
            <person name="Sanderson E.K."/>
            <person name="Porwollik S."/>
            <person name="Spieth J."/>
            <person name="Clifton W.S."/>
            <person name="Latreille P."/>
            <person name="Courtney L."/>
            <person name="Wang C."/>
            <person name="Pepin K."/>
            <person name="Bhonagiri V."/>
            <person name="Nash W."/>
            <person name="Johnson M."/>
            <person name="Thiruvilangam P."/>
            <person name="Wilson R."/>
        </authorList>
    </citation>
    <scope>NUCLEOTIDE SEQUENCE [LARGE SCALE GENOMIC DNA]</scope>
    <source>
        <strain>ATCC BAA-895 / CDC 4225-83 / SGSC4696</strain>
    </source>
</reference>
<keyword id="KW-0028">Amino-acid biosynthesis</keyword>
<keyword id="KW-0032">Aminotransferase</keyword>
<keyword id="KW-0963">Cytoplasm</keyword>
<keyword id="KW-0663">Pyridoxal phosphate</keyword>
<keyword id="KW-0664">Pyridoxine biosynthesis</keyword>
<keyword id="KW-1185">Reference proteome</keyword>
<keyword id="KW-0718">Serine biosynthesis</keyword>
<keyword id="KW-0808">Transferase</keyword>
<evidence type="ECO:0000255" key="1">
    <source>
        <dbReference type="HAMAP-Rule" id="MF_00160"/>
    </source>
</evidence>
<gene>
    <name evidence="1" type="primary">serC</name>
    <name type="ordered locus">CKO_02165</name>
</gene>
<comment type="function">
    <text evidence="1">Catalyzes the reversible conversion of 3-phosphohydroxypyruvate to phosphoserine and of 3-hydroxy-2-oxo-4-phosphonooxybutanoate to phosphohydroxythreonine.</text>
</comment>
<comment type="catalytic activity">
    <reaction evidence="1">
        <text>O-phospho-L-serine + 2-oxoglutarate = 3-phosphooxypyruvate + L-glutamate</text>
        <dbReference type="Rhea" id="RHEA:14329"/>
        <dbReference type="ChEBI" id="CHEBI:16810"/>
        <dbReference type="ChEBI" id="CHEBI:18110"/>
        <dbReference type="ChEBI" id="CHEBI:29985"/>
        <dbReference type="ChEBI" id="CHEBI:57524"/>
        <dbReference type="EC" id="2.6.1.52"/>
    </reaction>
</comment>
<comment type="catalytic activity">
    <reaction evidence="1">
        <text>4-(phosphooxy)-L-threonine + 2-oxoglutarate = (R)-3-hydroxy-2-oxo-4-phosphooxybutanoate + L-glutamate</text>
        <dbReference type="Rhea" id="RHEA:16573"/>
        <dbReference type="ChEBI" id="CHEBI:16810"/>
        <dbReference type="ChEBI" id="CHEBI:29985"/>
        <dbReference type="ChEBI" id="CHEBI:58452"/>
        <dbReference type="ChEBI" id="CHEBI:58538"/>
        <dbReference type="EC" id="2.6.1.52"/>
    </reaction>
</comment>
<comment type="cofactor">
    <cofactor evidence="1">
        <name>pyridoxal 5'-phosphate</name>
        <dbReference type="ChEBI" id="CHEBI:597326"/>
    </cofactor>
    <text evidence="1">Binds 1 pyridoxal phosphate per subunit.</text>
</comment>
<comment type="pathway">
    <text evidence="1">Amino-acid biosynthesis; L-serine biosynthesis; L-serine from 3-phospho-D-glycerate: step 2/3.</text>
</comment>
<comment type="pathway">
    <text evidence="1">Cofactor biosynthesis; pyridoxine 5'-phosphate biosynthesis; pyridoxine 5'-phosphate from D-erythrose 4-phosphate: step 3/5.</text>
</comment>
<comment type="subunit">
    <text evidence="1">Homodimer.</text>
</comment>
<comment type="subcellular location">
    <subcellularLocation>
        <location evidence="1">Cytoplasm</location>
    </subcellularLocation>
</comment>
<comment type="similarity">
    <text evidence="1">Belongs to the class-V pyridoxal-phosphate-dependent aminotransferase family. SerC subfamily.</text>
</comment>
<protein>
    <recommendedName>
        <fullName evidence="1">Phosphoserine aminotransferase</fullName>
        <ecNumber evidence="1">2.6.1.52</ecNumber>
    </recommendedName>
    <alternativeName>
        <fullName evidence="1">Phosphohydroxythreonine aminotransferase</fullName>
        <shortName evidence="1">PSAT</shortName>
    </alternativeName>
</protein>
<accession>A8AIH6</accession>
<proteinExistence type="inferred from homology"/>
<name>SERC_CITK8</name>
<organism>
    <name type="scientific">Citrobacter koseri (strain ATCC BAA-895 / CDC 4225-83 / SGSC4696)</name>
    <dbReference type="NCBI Taxonomy" id="290338"/>
    <lineage>
        <taxon>Bacteria</taxon>
        <taxon>Pseudomonadati</taxon>
        <taxon>Pseudomonadota</taxon>
        <taxon>Gammaproteobacteria</taxon>
        <taxon>Enterobacterales</taxon>
        <taxon>Enterobacteriaceae</taxon>
        <taxon>Citrobacter</taxon>
    </lineage>
</organism>